<dbReference type="EC" id="2.7.8.13" evidence="1"/>
<dbReference type="EMBL" id="CP001396">
    <property type="protein sequence ID" value="ACR64051.1"/>
    <property type="molecule type" value="Genomic_DNA"/>
</dbReference>
<dbReference type="RefSeq" id="WP_000964131.1">
    <property type="nucleotide sequence ID" value="NC_012759.1"/>
</dbReference>
<dbReference type="SMR" id="C4ZRI2"/>
<dbReference type="GeneID" id="93777347"/>
<dbReference type="KEGG" id="ebw:BWG_0082"/>
<dbReference type="HOGENOM" id="CLU_023982_0_0_6"/>
<dbReference type="UniPathway" id="UPA00219"/>
<dbReference type="GO" id="GO:0005886">
    <property type="term" value="C:plasma membrane"/>
    <property type="evidence" value="ECO:0007669"/>
    <property type="project" value="UniProtKB-SubCell"/>
</dbReference>
<dbReference type="GO" id="GO:0046872">
    <property type="term" value="F:metal ion binding"/>
    <property type="evidence" value="ECO:0007669"/>
    <property type="project" value="UniProtKB-KW"/>
</dbReference>
<dbReference type="GO" id="GO:0008963">
    <property type="term" value="F:phospho-N-acetylmuramoyl-pentapeptide-transferase activity"/>
    <property type="evidence" value="ECO:0007669"/>
    <property type="project" value="UniProtKB-UniRule"/>
</dbReference>
<dbReference type="GO" id="GO:0051992">
    <property type="term" value="F:UDP-N-acetylmuramoyl-L-alanyl-D-glutamyl-meso-2,6-diaminopimelyl-D-alanyl-D-alanine:undecaprenyl-phosphate transferase activity"/>
    <property type="evidence" value="ECO:0007669"/>
    <property type="project" value="RHEA"/>
</dbReference>
<dbReference type="GO" id="GO:0051301">
    <property type="term" value="P:cell division"/>
    <property type="evidence" value="ECO:0007669"/>
    <property type="project" value="UniProtKB-KW"/>
</dbReference>
<dbReference type="GO" id="GO:0071555">
    <property type="term" value="P:cell wall organization"/>
    <property type="evidence" value="ECO:0007669"/>
    <property type="project" value="UniProtKB-KW"/>
</dbReference>
<dbReference type="GO" id="GO:0009252">
    <property type="term" value="P:peptidoglycan biosynthetic process"/>
    <property type="evidence" value="ECO:0007669"/>
    <property type="project" value="UniProtKB-UniRule"/>
</dbReference>
<dbReference type="GO" id="GO:0008360">
    <property type="term" value="P:regulation of cell shape"/>
    <property type="evidence" value="ECO:0007669"/>
    <property type="project" value="UniProtKB-KW"/>
</dbReference>
<dbReference type="CDD" id="cd06852">
    <property type="entry name" value="GT_MraY"/>
    <property type="match status" value="1"/>
</dbReference>
<dbReference type="HAMAP" id="MF_00038">
    <property type="entry name" value="MraY"/>
    <property type="match status" value="1"/>
</dbReference>
<dbReference type="InterPro" id="IPR000715">
    <property type="entry name" value="Glycosyl_transferase_4"/>
</dbReference>
<dbReference type="InterPro" id="IPR003524">
    <property type="entry name" value="PNAcMuramoyl-5peptid_Trfase"/>
</dbReference>
<dbReference type="InterPro" id="IPR018480">
    <property type="entry name" value="PNAcMuramoyl-5peptid_Trfase_CS"/>
</dbReference>
<dbReference type="NCBIfam" id="TIGR00445">
    <property type="entry name" value="mraY"/>
    <property type="match status" value="1"/>
</dbReference>
<dbReference type="PANTHER" id="PTHR22926">
    <property type="entry name" value="PHOSPHO-N-ACETYLMURAMOYL-PENTAPEPTIDE-TRANSFERASE"/>
    <property type="match status" value="1"/>
</dbReference>
<dbReference type="PANTHER" id="PTHR22926:SF5">
    <property type="entry name" value="PHOSPHO-N-ACETYLMURAMOYL-PENTAPEPTIDE-TRANSFERASE HOMOLOG"/>
    <property type="match status" value="1"/>
</dbReference>
<dbReference type="Pfam" id="PF00953">
    <property type="entry name" value="Glycos_transf_4"/>
    <property type="match status" value="1"/>
</dbReference>
<dbReference type="Pfam" id="PF10555">
    <property type="entry name" value="MraY_sig1"/>
    <property type="match status" value="1"/>
</dbReference>
<dbReference type="PROSITE" id="PS01347">
    <property type="entry name" value="MRAY_1"/>
    <property type="match status" value="1"/>
</dbReference>
<dbReference type="PROSITE" id="PS01348">
    <property type="entry name" value="MRAY_2"/>
    <property type="match status" value="1"/>
</dbReference>
<name>MRAY_ECOBW</name>
<reference key="1">
    <citation type="journal article" date="2009" name="J. Bacteriol.">
        <title>Genomic sequencing reveals regulatory mutations and recombinational events in the widely used MC4100 lineage of Escherichia coli K-12.</title>
        <authorList>
            <person name="Ferenci T."/>
            <person name="Zhou Z."/>
            <person name="Betteridge T."/>
            <person name="Ren Y."/>
            <person name="Liu Y."/>
            <person name="Feng L."/>
            <person name="Reeves P.R."/>
            <person name="Wang L."/>
        </authorList>
    </citation>
    <scope>NUCLEOTIDE SEQUENCE [LARGE SCALE GENOMIC DNA]</scope>
    <source>
        <strain>K12 / MC4100 / BW2952</strain>
    </source>
</reference>
<organism>
    <name type="scientific">Escherichia coli (strain K12 / MC4100 / BW2952)</name>
    <dbReference type="NCBI Taxonomy" id="595496"/>
    <lineage>
        <taxon>Bacteria</taxon>
        <taxon>Pseudomonadati</taxon>
        <taxon>Pseudomonadota</taxon>
        <taxon>Gammaproteobacteria</taxon>
        <taxon>Enterobacterales</taxon>
        <taxon>Enterobacteriaceae</taxon>
        <taxon>Escherichia</taxon>
    </lineage>
</organism>
<evidence type="ECO:0000255" key="1">
    <source>
        <dbReference type="HAMAP-Rule" id="MF_00038"/>
    </source>
</evidence>
<accession>C4ZRI2</accession>
<sequence>MLVWLAEHLVKYYSGFNVFSYLTFRAIVSLLTALFISLWMGPRMIAHLQKLSFGQVVRNDGPESHFSKRGTPTMGGIMILTAIVISVLLWAYPSNPYVWCVLVVLVGYGVIGFVDDYRKVVRKDTKGLIARWKYFWMSVIALGVAFALYLAGKDTPATQLVVPFFKDVMPQLGLFYILLAYFVIVGTGNAVNLTDGLDGLAIMPTVFVAGGFALVAWATGNMNFASYLHIPYLRHAGELVIVCTAIVGAGLGFLWFNTYPAQVFMGDVGSLALGGALGIIAVLLRQEFLLVIMGGVFVVETLSVILQVGSFKLRGQRIFRMAPIHHHYELKGWPEPRVIVRFWIISLMLVLIGLATLKVR</sequence>
<protein>
    <recommendedName>
        <fullName evidence="1">Phospho-N-acetylmuramoyl-pentapeptide-transferase</fullName>
        <ecNumber evidence="1">2.7.8.13</ecNumber>
    </recommendedName>
    <alternativeName>
        <fullName evidence="1">UDP-MurNAc-pentapeptide phosphotransferase</fullName>
    </alternativeName>
</protein>
<gene>
    <name evidence="1" type="primary">mraY</name>
    <name type="ordered locus">BWG_0082</name>
</gene>
<feature type="chain" id="PRO_1000202066" description="Phospho-N-acetylmuramoyl-pentapeptide-transferase">
    <location>
        <begin position="1"/>
        <end position="360"/>
    </location>
</feature>
<feature type="topological domain" description="Periplasmic" evidence="1">
    <location>
        <begin position="1"/>
        <end position="25"/>
    </location>
</feature>
<feature type="transmembrane region" description="Helical" evidence="1">
    <location>
        <begin position="26"/>
        <end position="46"/>
    </location>
</feature>
<feature type="topological domain" description="Cytoplasmic" evidence="1">
    <location>
        <begin position="47"/>
        <end position="71"/>
    </location>
</feature>
<feature type="transmembrane region" description="Helical" evidence="1">
    <location>
        <begin position="72"/>
        <end position="92"/>
    </location>
</feature>
<feature type="topological domain" description="Periplasmic" evidence="1">
    <location>
        <position position="93"/>
    </location>
</feature>
<feature type="transmembrane region" description="Helical" evidence="1">
    <location>
        <begin position="94"/>
        <end position="114"/>
    </location>
</feature>
<feature type="topological domain" description="Cytoplasmic" evidence="1">
    <location>
        <begin position="115"/>
        <end position="131"/>
    </location>
</feature>
<feature type="transmembrane region" description="Helical" evidence="1">
    <location>
        <begin position="132"/>
        <end position="152"/>
    </location>
</feature>
<feature type="topological domain" description="Periplasmic" evidence="1">
    <location>
        <begin position="153"/>
        <end position="167"/>
    </location>
</feature>
<feature type="transmembrane region" description="Helical" evidence="1">
    <location>
        <begin position="168"/>
        <end position="188"/>
    </location>
</feature>
<feature type="topological domain" description="Cytoplasmic" evidence="1">
    <location>
        <begin position="189"/>
        <end position="198"/>
    </location>
</feature>
<feature type="transmembrane region" description="Helical" evidence="1">
    <location>
        <begin position="199"/>
        <end position="219"/>
    </location>
</feature>
<feature type="topological domain" description="Periplasmic" evidence="1">
    <location>
        <begin position="220"/>
        <end position="235"/>
    </location>
</feature>
<feature type="transmembrane region" description="Helical" evidence="1">
    <location>
        <begin position="236"/>
        <end position="256"/>
    </location>
</feature>
<feature type="topological domain" description="Cytoplasmic" evidence="1">
    <location>
        <begin position="257"/>
        <end position="262"/>
    </location>
</feature>
<feature type="transmembrane region" description="Helical" evidence="1">
    <location>
        <begin position="263"/>
        <end position="283"/>
    </location>
</feature>
<feature type="topological domain" description="Periplasmic" evidence="1">
    <location>
        <begin position="284"/>
        <end position="287"/>
    </location>
</feature>
<feature type="transmembrane region" description="Helical" evidence="1">
    <location>
        <begin position="288"/>
        <end position="308"/>
    </location>
</feature>
<feature type="topological domain" description="Cytoplasmic" evidence="1">
    <location>
        <begin position="309"/>
        <end position="337"/>
    </location>
</feature>
<feature type="transmembrane region" description="Helical" evidence="1">
    <location>
        <begin position="338"/>
        <end position="358"/>
    </location>
</feature>
<feature type="topological domain" description="Periplasmic" evidence="1">
    <location>
        <begin position="359"/>
        <end position="360"/>
    </location>
</feature>
<keyword id="KW-0131">Cell cycle</keyword>
<keyword id="KW-0132">Cell division</keyword>
<keyword id="KW-0997">Cell inner membrane</keyword>
<keyword id="KW-1003">Cell membrane</keyword>
<keyword id="KW-0133">Cell shape</keyword>
<keyword id="KW-0961">Cell wall biogenesis/degradation</keyword>
<keyword id="KW-0460">Magnesium</keyword>
<keyword id="KW-0472">Membrane</keyword>
<keyword id="KW-0479">Metal-binding</keyword>
<keyword id="KW-0573">Peptidoglycan synthesis</keyword>
<keyword id="KW-0808">Transferase</keyword>
<keyword id="KW-0812">Transmembrane</keyword>
<keyword id="KW-1133">Transmembrane helix</keyword>
<proteinExistence type="inferred from homology"/>
<comment type="function">
    <text evidence="1">Catalyzes the initial step of the lipid cycle reactions in the biosynthesis of the cell wall peptidoglycan: transfers peptidoglycan precursor phospho-MurNAc-pentapeptide from UDP-MurNAc-pentapeptide onto the lipid carrier undecaprenyl phosphate, yielding undecaprenyl-pyrophosphoryl-MurNAc-pentapeptide, known as lipid I.</text>
</comment>
<comment type="catalytic activity">
    <reaction evidence="1">
        <text>UDP-N-acetyl-alpha-D-muramoyl-L-alanyl-gamma-D-glutamyl-meso-2,6-diaminopimeloyl-D-alanyl-D-alanine + di-trans,octa-cis-undecaprenyl phosphate = di-trans,octa-cis-undecaprenyl diphospho-N-acetyl-alpha-D-muramoyl-L-alanyl-D-glutamyl-meso-2,6-diaminopimeloyl-D-alanyl-D-alanine + UMP</text>
        <dbReference type="Rhea" id="RHEA:28386"/>
        <dbReference type="ChEBI" id="CHEBI:57865"/>
        <dbReference type="ChEBI" id="CHEBI:60392"/>
        <dbReference type="ChEBI" id="CHEBI:61386"/>
        <dbReference type="ChEBI" id="CHEBI:61387"/>
        <dbReference type="EC" id="2.7.8.13"/>
    </reaction>
</comment>
<comment type="cofactor">
    <cofactor evidence="1">
        <name>Mg(2+)</name>
        <dbReference type="ChEBI" id="CHEBI:18420"/>
    </cofactor>
</comment>
<comment type="pathway">
    <text evidence="1">Cell wall biogenesis; peptidoglycan biosynthesis.</text>
</comment>
<comment type="subcellular location">
    <subcellularLocation>
        <location evidence="1">Cell inner membrane</location>
        <topology evidence="1">Multi-pass membrane protein</topology>
    </subcellularLocation>
</comment>
<comment type="similarity">
    <text evidence="1">Belongs to the glycosyltransferase 4 family. MraY subfamily.</text>
</comment>